<reference key="1">
    <citation type="journal article" date="2011" name="Stand. Genomic Sci.">
        <title>Complete genome sequence of Parvibaculum lavamentivorans type strain (DS-1(T)).</title>
        <authorList>
            <person name="Schleheck D."/>
            <person name="Weiss M."/>
            <person name="Pitluck S."/>
            <person name="Bruce D."/>
            <person name="Land M.L."/>
            <person name="Han S."/>
            <person name="Saunders E."/>
            <person name="Tapia R."/>
            <person name="Detter C."/>
            <person name="Brettin T."/>
            <person name="Han J."/>
            <person name="Woyke T."/>
            <person name="Goodwin L."/>
            <person name="Pennacchio L."/>
            <person name="Nolan M."/>
            <person name="Cook A.M."/>
            <person name="Kjelleberg S."/>
            <person name="Thomas T."/>
        </authorList>
    </citation>
    <scope>NUCLEOTIDE SEQUENCE [LARGE SCALE GENOMIC DNA]</scope>
    <source>
        <strain>DS-1 / DSM 13023 / NCIMB 13966</strain>
    </source>
</reference>
<evidence type="ECO:0000255" key="1">
    <source>
        <dbReference type="HAMAP-Rule" id="MF_00023"/>
    </source>
</evidence>
<organism>
    <name type="scientific">Parvibaculum lavamentivorans (strain DS-1 / DSM 13023 / NCIMB 13966)</name>
    <dbReference type="NCBI Taxonomy" id="402881"/>
    <lineage>
        <taxon>Bacteria</taxon>
        <taxon>Pseudomonadati</taxon>
        <taxon>Pseudomonadota</taxon>
        <taxon>Alphaproteobacteria</taxon>
        <taxon>Hyphomicrobiales</taxon>
        <taxon>Parvibaculaceae</taxon>
        <taxon>Parvibaculum</taxon>
    </lineage>
</organism>
<keyword id="KW-0963">Cytoplasm</keyword>
<keyword id="KW-1185">Reference proteome</keyword>
<keyword id="KW-0694">RNA-binding</keyword>
<protein>
    <recommendedName>
        <fullName evidence="1">SsrA-binding protein</fullName>
    </recommendedName>
    <alternativeName>
        <fullName evidence="1">Small protein B</fullName>
    </alternativeName>
</protein>
<proteinExistence type="inferred from homology"/>
<feature type="chain" id="PRO_0000331072" description="SsrA-binding protein">
    <location>
        <begin position="1"/>
        <end position="165"/>
    </location>
</feature>
<accession>A7HX37</accession>
<dbReference type="EMBL" id="CP000774">
    <property type="protein sequence ID" value="ABS64470.1"/>
    <property type="molecule type" value="Genomic_DNA"/>
</dbReference>
<dbReference type="RefSeq" id="WP_012111785.1">
    <property type="nucleotide sequence ID" value="NC_009719.1"/>
</dbReference>
<dbReference type="SMR" id="A7HX37"/>
<dbReference type="STRING" id="402881.Plav_2863"/>
<dbReference type="KEGG" id="pla:Plav_2863"/>
<dbReference type="eggNOG" id="COG0691">
    <property type="taxonomic scope" value="Bacteria"/>
</dbReference>
<dbReference type="HOGENOM" id="CLU_108953_0_1_5"/>
<dbReference type="OrthoDB" id="9805462at2"/>
<dbReference type="Proteomes" id="UP000006377">
    <property type="component" value="Chromosome"/>
</dbReference>
<dbReference type="GO" id="GO:0005829">
    <property type="term" value="C:cytosol"/>
    <property type="evidence" value="ECO:0007669"/>
    <property type="project" value="TreeGrafter"/>
</dbReference>
<dbReference type="GO" id="GO:0003723">
    <property type="term" value="F:RNA binding"/>
    <property type="evidence" value="ECO:0007669"/>
    <property type="project" value="UniProtKB-UniRule"/>
</dbReference>
<dbReference type="GO" id="GO:0070929">
    <property type="term" value="P:trans-translation"/>
    <property type="evidence" value="ECO:0007669"/>
    <property type="project" value="UniProtKB-UniRule"/>
</dbReference>
<dbReference type="CDD" id="cd09294">
    <property type="entry name" value="SmpB"/>
    <property type="match status" value="1"/>
</dbReference>
<dbReference type="Gene3D" id="2.40.280.10">
    <property type="match status" value="1"/>
</dbReference>
<dbReference type="HAMAP" id="MF_00023">
    <property type="entry name" value="SmpB"/>
    <property type="match status" value="1"/>
</dbReference>
<dbReference type="InterPro" id="IPR023620">
    <property type="entry name" value="SmpB"/>
</dbReference>
<dbReference type="InterPro" id="IPR000037">
    <property type="entry name" value="SsrA-bd_prot"/>
</dbReference>
<dbReference type="InterPro" id="IPR020081">
    <property type="entry name" value="SsrA-bd_prot_CS"/>
</dbReference>
<dbReference type="NCBIfam" id="NF003843">
    <property type="entry name" value="PRK05422.1"/>
    <property type="match status" value="1"/>
</dbReference>
<dbReference type="NCBIfam" id="TIGR00086">
    <property type="entry name" value="smpB"/>
    <property type="match status" value="1"/>
</dbReference>
<dbReference type="PANTHER" id="PTHR30308:SF2">
    <property type="entry name" value="SSRA-BINDING PROTEIN"/>
    <property type="match status" value="1"/>
</dbReference>
<dbReference type="PANTHER" id="PTHR30308">
    <property type="entry name" value="TMRNA-BINDING COMPONENT OF TRANS-TRANSLATION TAGGING COMPLEX"/>
    <property type="match status" value="1"/>
</dbReference>
<dbReference type="Pfam" id="PF01668">
    <property type="entry name" value="SmpB"/>
    <property type="match status" value="1"/>
</dbReference>
<dbReference type="SUPFAM" id="SSF74982">
    <property type="entry name" value="Small protein B (SmpB)"/>
    <property type="match status" value="1"/>
</dbReference>
<dbReference type="PROSITE" id="PS01317">
    <property type="entry name" value="SSRP"/>
    <property type="match status" value="1"/>
</dbReference>
<sequence length="165" mass="18695">MSSKSGGAKKKAGDGRKIIADNRKARFNYSIGETFEAGIELKGSEVKSLRTGQGSLNEAYAQVTRTGEVMLVNAYIPIYLQANQFNHETRRPRKLLLHKREIEKLAAAVQRQGMTVVPLRMYFTDKGRVKVEIGLAQGKKLADKRETLKERSWERDKARLMREKG</sequence>
<gene>
    <name evidence="1" type="primary">smpB</name>
    <name type="ordered locus">Plav_2863</name>
</gene>
<comment type="function">
    <text evidence="1">Required for rescue of stalled ribosomes mediated by trans-translation. Binds to transfer-messenger RNA (tmRNA), required for stable association of tmRNA with ribosomes. tmRNA and SmpB together mimic tRNA shape, replacing the anticodon stem-loop with SmpB. tmRNA is encoded by the ssrA gene; the 2 termini fold to resemble tRNA(Ala) and it encodes a 'tag peptide', a short internal open reading frame. During trans-translation Ala-aminoacylated tmRNA acts like a tRNA, entering the A-site of stalled ribosomes, displacing the stalled mRNA. The ribosome then switches to translate the ORF on the tmRNA; the nascent peptide is terminated with the 'tag peptide' encoded by the tmRNA and targeted for degradation. The ribosome is freed to recommence translation, which seems to be the essential function of trans-translation.</text>
</comment>
<comment type="subcellular location">
    <subcellularLocation>
        <location evidence="1">Cytoplasm</location>
    </subcellularLocation>
    <text evidence="1">The tmRNA-SmpB complex associates with stalled 70S ribosomes.</text>
</comment>
<comment type="similarity">
    <text evidence="1">Belongs to the SmpB family.</text>
</comment>
<name>SSRP_PARL1</name>